<organism>
    <name type="scientific">Francisella tularensis subsp. novicida (strain U112)</name>
    <dbReference type="NCBI Taxonomy" id="401614"/>
    <lineage>
        <taxon>Bacteria</taxon>
        <taxon>Pseudomonadati</taxon>
        <taxon>Pseudomonadota</taxon>
        <taxon>Gammaproteobacteria</taxon>
        <taxon>Thiotrichales</taxon>
        <taxon>Francisellaceae</taxon>
        <taxon>Francisella</taxon>
    </lineage>
</organism>
<protein>
    <recommendedName>
        <fullName evidence="1">Large ribosomal subunit protein bL9</fullName>
    </recommendedName>
    <alternativeName>
        <fullName evidence="2">50S ribosomal protein L9</fullName>
    </alternativeName>
</protein>
<gene>
    <name evidence="1" type="primary">rplI</name>
    <name type="ordered locus">FTN_0949</name>
</gene>
<evidence type="ECO:0000255" key="1">
    <source>
        <dbReference type="HAMAP-Rule" id="MF_00503"/>
    </source>
</evidence>
<evidence type="ECO:0000305" key="2"/>
<keyword id="KW-0687">Ribonucleoprotein</keyword>
<keyword id="KW-0689">Ribosomal protein</keyword>
<keyword id="KW-0694">RNA-binding</keyword>
<keyword id="KW-0699">rRNA-binding</keyword>
<comment type="function">
    <text evidence="1">Binds to the 23S rRNA.</text>
</comment>
<comment type="similarity">
    <text evidence="1">Belongs to the bacterial ribosomal protein bL9 family.</text>
</comment>
<feature type="chain" id="PRO_1000014781" description="Large ribosomal subunit protein bL9">
    <location>
        <begin position="1"/>
        <end position="151"/>
    </location>
</feature>
<dbReference type="EMBL" id="CP000439">
    <property type="protein sequence ID" value="ABK89837.1"/>
    <property type="molecule type" value="Genomic_DNA"/>
</dbReference>
<dbReference type="RefSeq" id="WP_003039327.1">
    <property type="nucleotide sequence ID" value="NC_008601.1"/>
</dbReference>
<dbReference type="SMR" id="A0Q6H2"/>
<dbReference type="KEGG" id="ftn:FTN_0949"/>
<dbReference type="KEGG" id="ftx:AW25_1063"/>
<dbReference type="BioCyc" id="FTUL401614:G1G75-989-MONOMER"/>
<dbReference type="Proteomes" id="UP000000762">
    <property type="component" value="Chromosome"/>
</dbReference>
<dbReference type="GO" id="GO:1990904">
    <property type="term" value="C:ribonucleoprotein complex"/>
    <property type="evidence" value="ECO:0007669"/>
    <property type="project" value="UniProtKB-KW"/>
</dbReference>
<dbReference type="GO" id="GO:0005840">
    <property type="term" value="C:ribosome"/>
    <property type="evidence" value="ECO:0007669"/>
    <property type="project" value="UniProtKB-KW"/>
</dbReference>
<dbReference type="GO" id="GO:0019843">
    <property type="term" value="F:rRNA binding"/>
    <property type="evidence" value="ECO:0007669"/>
    <property type="project" value="UniProtKB-UniRule"/>
</dbReference>
<dbReference type="GO" id="GO:0003735">
    <property type="term" value="F:structural constituent of ribosome"/>
    <property type="evidence" value="ECO:0007669"/>
    <property type="project" value="InterPro"/>
</dbReference>
<dbReference type="GO" id="GO:0006412">
    <property type="term" value="P:translation"/>
    <property type="evidence" value="ECO:0007669"/>
    <property type="project" value="UniProtKB-UniRule"/>
</dbReference>
<dbReference type="Gene3D" id="3.10.430.100">
    <property type="entry name" value="Ribosomal protein L9, C-terminal domain"/>
    <property type="match status" value="1"/>
</dbReference>
<dbReference type="Gene3D" id="3.40.5.10">
    <property type="entry name" value="Ribosomal protein L9, N-terminal domain"/>
    <property type="match status" value="1"/>
</dbReference>
<dbReference type="HAMAP" id="MF_00503">
    <property type="entry name" value="Ribosomal_bL9"/>
    <property type="match status" value="1"/>
</dbReference>
<dbReference type="InterPro" id="IPR000244">
    <property type="entry name" value="Ribosomal_bL9"/>
</dbReference>
<dbReference type="InterPro" id="IPR009027">
    <property type="entry name" value="Ribosomal_bL9/RNase_H1_N"/>
</dbReference>
<dbReference type="InterPro" id="IPR020594">
    <property type="entry name" value="Ribosomal_bL9_bac/chp"/>
</dbReference>
<dbReference type="InterPro" id="IPR020069">
    <property type="entry name" value="Ribosomal_bL9_C"/>
</dbReference>
<dbReference type="InterPro" id="IPR036791">
    <property type="entry name" value="Ribosomal_bL9_C_sf"/>
</dbReference>
<dbReference type="InterPro" id="IPR020070">
    <property type="entry name" value="Ribosomal_bL9_N"/>
</dbReference>
<dbReference type="InterPro" id="IPR036935">
    <property type="entry name" value="Ribosomal_bL9_N_sf"/>
</dbReference>
<dbReference type="NCBIfam" id="TIGR00158">
    <property type="entry name" value="L9"/>
    <property type="match status" value="1"/>
</dbReference>
<dbReference type="PANTHER" id="PTHR21368">
    <property type="entry name" value="50S RIBOSOMAL PROTEIN L9"/>
    <property type="match status" value="1"/>
</dbReference>
<dbReference type="Pfam" id="PF03948">
    <property type="entry name" value="Ribosomal_L9_C"/>
    <property type="match status" value="1"/>
</dbReference>
<dbReference type="Pfam" id="PF01281">
    <property type="entry name" value="Ribosomal_L9_N"/>
    <property type="match status" value="1"/>
</dbReference>
<dbReference type="SUPFAM" id="SSF55658">
    <property type="entry name" value="L9 N-domain-like"/>
    <property type="match status" value="1"/>
</dbReference>
<dbReference type="SUPFAM" id="SSF55653">
    <property type="entry name" value="Ribosomal protein L9 C-domain"/>
    <property type="match status" value="1"/>
</dbReference>
<dbReference type="PROSITE" id="PS00651">
    <property type="entry name" value="RIBOSOMAL_L9"/>
    <property type="match status" value="1"/>
</dbReference>
<name>RL9_FRATN</name>
<accession>A0Q6H2</accession>
<sequence length="151" mass="16081">MQVILKEKVENLGVLGDIVNVKPGYARNFLIPFGKAVQATQANIKAFEAQKAELEKAEKARFEAAVAVADAIKDKVYTIAAQAGEGGKLFGSVGTAEVAEAVSNQSGKKVEKSQVRMPEGVIRSVGEFEFTVHVYTDVDADIKVNVVAAEA</sequence>
<proteinExistence type="inferred from homology"/>
<reference key="1">
    <citation type="journal article" date="2007" name="Genome Biol.">
        <title>Comparison of Francisella tularensis genomes reveals evolutionary events associated with the emergence of human pathogenic strains.</title>
        <authorList>
            <person name="Rohmer L."/>
            <person name="Fong C."/>
            <person name="Abmayr S."/>
            <person name="Wasnick M."/>
            <person name="Larson Freeman T.J."/>
            <person name="Radey M."/>
            <person name="Guina T."/>
            <person name="Svensson K."/>
            <person name="Hayden H.S."/>
            <person name="Jacobs M."/>
            <person name="Gallagher L.A."/>
            <person name="Manoil C."/>
            <person name="Ernst R.K."/>
            <person name="Drees B."/>
            <person name="Buckley D."/>
            <person name="Haugen E."/>
            <person name="Bovee D."/>
            <person name="Zhou Y."/>
            <person name="Chang J."/>
            <person name="Levy R."/>
            <person name="Lim R."/>
            <person name="Gillett W."/>
            <person name="Guenthener D."/>
            <person name="Kang A."/>
            <person name="Shaffer S.A."/>
            <person name="Taylor G."/>
            <person name="Chen J."/>
            <person name="Gallis B."/>
            <person name="D'Argenio D.A."/>
            <person name="Forsman M."/>
            <person name="Olson M.V."/>
            <person name="Goodlett D.R."/>
            <person name="Kaul R."/>
            <person name="Miller S.I."/>
            <person name="Brittnacher M.J."/>
        </authorList>
    </citation>
    <scope>NUCLEOTIDE SEQUENCE [LARGE SCALE GENOMIC DNA]</scope>
    <source>
        <strain>U112</strain>
    </source>
</reference>